<reference key="1">
    <citation type="journal article" date="2005" name="Genome Res.">
        <title>Comparative and functional genomic analyses of the pathogenicity of phytopathogen Xanthomonas campestris pv. campestris.</title>
        <authorList>
            <person name="Qian W."/>
            <person name="Jia Y."/>
            <person name="Ren S.-X."/>
            <person name="He Y.-Q."/>
            <person name="Feng J.-X."/>
            <person name="Lu L.-F."/>
            <person name="Sun Q."/>
            <person name="Ying G."/>
            <person name="Tang D.-J."/>
            <person name="Tang H."/>
            <person name="Wu W."/>
            <person name="Hao P."/>
            <person name="Wang L."/>
            <person name="Jiang B.-L."/>
            <person name="Zeng S."/>
            <person name="Gu W.-Y."/>
            <person name="Lu G."/>
            <person name="Rong L."/>
            <person name="Tian Y."/>
            <person name="Yao Z."/>
            <person name="Fu G."/>
            <person name="Chen B."/>
            <person name="Fang R."/>
            <person name="Qiang B."/>
            <person name="Chen Z."/>
            <person name="Zhao G.-P."/>
            <person name="Tang J.-L."/>
            <person name="He C."/>
        </authorList>
    </citation>
    <scope>NUCLEOTIDE SEQUENCE [LARGE SCALE GENOMIC DNA]</scope>
    <source>
        <strain>8004</strain>
    </source>
</reference>
<accession>Q4UYZ8</accession>
<comment type="function">
    <text evidence="1">Involved in the biosynthesis of osmoregulated periplasmic glucans (OPGs).</text>
</comment>
<comment type="pathway">
    <text evidence="1">Glycan metabolism; osmoregulated periplasmic glucan (OPG) biosynthesis.</text>
</comment>
<comment type="subcellular location">
    <subcellularLocation>
        <location evidence="1">Cell inner membrane</location>
        <topology evidence="1">Multi-pass membrane protein</topology>
    </subcellularLocation>
</comment>
<comment type="similarity">
    <text evidence="1">Belongs to the glycosyltransferase 2 family. OpgH subfamily.</text>
</comment>
<sequence length="645" mass="70020">MDGTVTLSPAPTDLPPVSSLDAGQPTLPPEAPLAMPEQSLREGSLQVRHQRTSPMGIGLRRFYLIGGTLTATAVAVWVMLSVLWPGGFSVLEGCLLGLFVLLFAWIAMSFASAVAGFITVVARAGRKLGIDPDAPLPSLHTRTALLMPTYNEDPRRLLAGLQAIYESVAETGQLEHFDFFVLSDTTREHIGRAEEQVYAELCDSVGGHGRIFYRRRADNAARKAGNVADWVRRFGGNYPQMLILDADSVMTGDTIVRLVAGMEDNPDVGLIQTLPAVVNGQTLFARMQQFGGRVYGPIIAFGVAWWHGAESNYWGHNAIIRTQAFADHAGLPSLRGRKPFGGHVLSHDFVEAALMRRGGWAMHMVPYLQGSYEEGPPTLTDLLVRDRRWCQGNLQHAKVVGAKGLHWISRMHMMIGIGHYFTAPMWGMLMLVGIGIPLAGAGIDLAQGLPFSPARYWHGSSDGNAIWIFVCTMFVLLAPKLLGYIALLLNPRERRACGGAIRAALSILLETVLAALMAPVVMYLQSRGVFEVLAGKDSGWDAQVRDDGKLSWPALIRSYGGLSVFGLFMGTLAYLVSPSLAAWMAPVIVGMVVSIPVVAVTSLRRTGLALRRAGIFCIPEELDPPKVLVRASELRRAAALEPSLI</sequence>
<dbReference type="EC" id="2.4.1.-" evidence="1"/>
<dbReference type="EMBL" id="CP000050">
    <property type="protein sequence ID" value="AAY47725.1"/>
    <property type="molecule type" value="Genomic_DNA"/>
</dbReference>
<dbReference type="CAZy" id="GT2">
    <property type="family name" value="Glycosyltransferase Family 2"/>
</dbReference>
<dbReference type="KEGG" id="xcb:XC_0645"/>
<dbReference type="HOGENOM" id="CLU_015730_1_0_6"/>
<dbReference type="UniPathway" id="UPA00637"/>
<dbReference type="Proteomes" id="UP000000420">
    <property type="component" value="Chromosome"/>
</dbReference>
<dbReference type="GO" id="GO:0005886">
    <property type="term" value="C:plasma membrane"/>
    <property type="evidence" value="ECO:0007669"/>
    <property type="project" value="UniProtKB-SubCell"/>
</dbReference>
<dbReference type="GO" id="GO:0016758">
    <property type="term" value="F:hexosyltransferase activity"/>
    <property type="evidence" value="ECO:0007669"/>
    <property type="project" value="UniProtKB-UniRule"/>
</dbReference>
<dbReference type="GO" id="GO:0009250">
    <property type="term" value="P:glucan biosynthetic process"/>
    <property type="evidence" value="ECO:0007669"/>
    <property type="project" value="UniProtKB-UniRule"/>
</dbReference>
<dbReference type="CDD" id="cd04191">
    <property type="entry name" value="Glucan_BSP_MdoH"/>
    <property type="match status" value="1"/>
</dbReference>
<dbReference type="Gene3D" id="3.90.550.10">
    <property type="entry name" value="Spore Coat Polysaccharide Biosynthesis Protein SpsA, Chain A"/>
    <property type="match status" value="1"/>
</dbReference>
<dbReference type="HAMAP" id="MF_01072">
    <property type="entry name" value="MdoH_OpgH"/>
    <property type="match status" value="1"/>
</dbReference>
<dbReference type="InterPro" id="IPR023725">
    <property type="entry name" value="Glucans_biosynth_gluTrFase_H"/>
</dbReference>
<dbReference type="InterPro" id="IPR001173">
    <property type="entry name" value="Glyco_trans_2-like"/>
</dbReference>
<dbReference type="InterPro" id="IPR050321">
    <property type="entry name" value="Glycosyltr_2/OpgH_subfam"/>
</dbReference>
<dbReference type="InterPro" id="IPR029044">
    <property type="entry name" value="Nucleotide-diphossugar_trans"/>
</dbReference>
<dbReference type="NCBIfam" id="NF003956">
    <property type="entry name" value="PRK05454.1-3"/>
    <property type="match status" value="1"/>
</dbReference>
<dbReference type="NCBIfam" id="NF003957">
    <property type="entry name" value="PRK05454.1-4"/>
    <property type="match status" value="1"/>
</dbReference>
<dbReference type="NCBIfam" id="NF003958">
    <property type="entry name" value="PRK05454.2-1"/>
    <property type="match status" value="1"/>
</dbReference>
<dbReference type="NCBIfam" id="NF003962">
    <property type="entry name" value="PRK05454.2-5"/>
    <property type="match status" value="1"/>
</dbReference>
<dbReference type="PANTHER" id="PTHR43867">
    <property type="entry name" value="CELLULOSE SYNTHASE CATALYTIC SUBUNIT A [UDP-FORMING]"/>
    <property type="match status" value="1"/>
</dbReference>
<dbReference type="PANTHER" id="PTHR43867:SF5">
    <property type="entry name" value="GLUCANS BIOSYNTHESIS GLUCOSYLTRANSFERASE H"/>
    <property type="match status" value="1"/>
</dbReference>
<dbReference type="Pfam" id="PF13632">
    <property type="entry name" value="Glyco_trans_2_3"/>
    <property type="match status" value="1"/>
</dbReference>
<dbReference type="SUPFAM" id="SSF53448">
    <property type="entry name" value="Nucleotide-diphospho-sugar transferases"/>
    <property type="match status" value="1"/>
</dbReference>
<evidence type="ECO:0000255" key="1">
    <source>
        <dbReference type="HAMAP-Rule" id="MF_01072"/>
    </source>
</evidence>
<evidence type="ECO:0000256" key="2">
    <source>
        <dbReference type="SAM" id="MobiDB-lite"/>
    </source>
</evidence>
<protein>
    <recommendedName>
        <fullName evidence="1">Glucans biosynthesis glucosyltransferase H</fullName>
        <ecNumber evidence="1">2.4.1.-</ecNumber>
    </recommendedName>
</protein>
<proteinExistence type="inferred from homology"/>
<name>OPGH_XANC8</name>
<keyword id="KW-0997">Cell inner membrane</keyword>
<keyword id="KW-1003">Cell membrane</keyword>
<keyword id="KW-0328">Glycosyltransferase</keyword>
<keyword id="KW-0472">Membrane</keyword>
<keyword id="KW-0808">Transferase</keyword>
<keyword id="KW-0812">Transmembrane</keyword>
<keyword id="KW-1133">Transmembrane helix</keyword>
<feature type="chain" id="PRO_1000064620" description="Glucans biosynthesis glucosyltransferase H">
    <location>
        <begin position="1"/>
        <end position="645"/>
    </location>
</feature>
<feature type="transmembrane region" description="Helical" evidence="1">
    <location>
        <begin position="64"/>
        <end position="84"/>
    </location>
</feature>
<feature type="transmembrane region" description="Helical" evidence="1">
    <location>
        <begin position="98"/>
        <end position="118"/>
    </location>
</feature>
<feature type="transmembrane region" description="Helical" evidence="1">
    <location>
        <begin position="423"/>
        <end position="443"/>
    </location>
</feature>
<feature type="transmembrane region" description="Helical" evidence="1">
    <location>
        <begin position="465"/>
        <end position="485"/>
    </location>
</feature>
<feature type="transmembrane region" description="Helical" evidence="1">
    <location>
        <begin position="504"/>
        <end position="524"/>
    </location>
</feature>
<feature type="transmembrane region" description="Helical" evidence="1">
    <location>
        <begin position="558"/>
        <end position="578"/>
    </location>
</feature>
<feature type="transmembrane region" description="Helical" evidence="1">
    <location>
        <begin position="580"/>
        <end position="600"/>
    </location>
</feature>
<feature type="region of interest" description="Disordered" evidence="2">
    <location>
        <begin position="1"/>
        <end position="28"/>
    </location>
</feature>
<organism>
    <name type="scientific">Xanthomonas campestris pv. campestris (strain 8004)</name>
    <dbReference type="NCBI Taxonomy" id="314565"/>
    <lineage>
        <taxon>Bacteria</taxon>
        <taxon>Pseudomonadati</taxon>
        <taxon>Pseudomonadota</taxon>
        <taxon>Gammaproteobacteria</taxon>
        <taxon>Lysobacterales</taxon>
        <taxon>Lysobacteraceae</taxon>
        <taxon>Xanthomonas</taxon>
    </lineage>
</organism>
<gene>
    <name evidence="1" type="primary">opgH</name>
    <name type="ordered locus">XC_0645</name>
</gene>